<feature type="chain" id="PRO_0000389993" description="NADH-quinone oxidoreductase subunit K">
    <location>
        <begin position="1"/>
        <end position="101"/>
    </location>
</feature>
<feature type="transmembrane region" description="Helical" evidence="1">
    <location>
        <begin position="4"/>
        <end position="24"/>
    </location>
</feature>
<feature type="transmembrane region" description="Helical" evidence="1">
    <location>
        <begin position="30"/>
        <end position="50"/>
    </location>
</feature>
<feature type="transmembrane region" description="Helical" evidence="1">
    <location>
        <begin position="61"/>
        <end position="81"/>
    </location>
</feature>
<organism>
    <name type="scientific">Paraburkholderia phymatum (strain DSM 17167 / CIP 108236 / LMG 21445 / STM815)</name>
    <name type="common">Burkholderia phymatum</name>
    <dbReference type="NCBI Taxonomy" id="391038"/>
    <lineage>
        <taxon>Bacteria</taxon>
        <taxon>Pseudomonadati</taxon>
        <taxon>Pseudomonadota</taxon>
        <taxon>Betaproteobacteria</taxon>
        <taxon>Burkholderiales</taxon>
        <taxon>Burkholderiaceae</taxon>
        <taxon>Paraburkholderia</taxon>
    </lineage>
</organism>
<protein>
    <recommendedName>
        <fullName evidence="1">NADH-quinone oxidoreductase subunit K</fullName>
        <ecNumber evidence="1">7.1.1.-</ecNumber>
    </recommendedName>
    <alternativeName>
        <fullName evidence="1">NADH dehydrogenase I subunit K</fullName>
    </alternativeName>
    <alternativeName>
        <fullName evidence="1">NDH-1 subunit K</fullName>
    </alternativeName>
</protein>
<dbReference type="EC" id="7.1.1.-" evidence="1"/>
<dbReference type="EMBL" id="CP001043">
    <property type="protein sequence ID" value="ACC71178.1"/>
    <property type="molecule type" value="Genomic_DNA"/>
</dbReference>
<dbReference type="RefSeq" id="WP_007588140.1">
    <property type="nucleotide sequence ID" value="NZ_CADFGH010000002.1"/>
</dbReference>
<dbReference type="SMR" id="B2JDL8"/>
<dbReference type="STRING" id="391038.Bphy_1999"/>
<dbReference type="GeneID" id="69968800"/>
<dbReference type="KEGG" id="bph:Bphy_1999"/>
<dbReference type="eggNOG" id="COG0713">
    <property type="taxonomic scope" value="Bacteria"/>
</dbReference>
<dbReference type="HOGENOM" id="CLU_144724_2_0_4"/>
<dbReference type="Proteomes" id="UP000001192">
    <property type="component" value="Chromosome 1"/>
</dbReference>
<dbReference type="GO" id="GO:0030964">
    <property type="term" value="C:NADH dehydrogenase complex"/>
    <property type="evidence" value="ECO:0007669"/>
    <property type="project" value="TreeGrafter"/>
</dbReference>
<dbReference type="GO" id="GO:0005886">
    <property type="term" value="C:plasma membrane"/>
    <property type="evidence" value="ECO:0007669"/>
    <property type="project" value="UniProtKB-SubCell"/>
</dbReference>
<dbReference type="GO" id="GO:0050136">
    <property type="term" value="F:NADH:ubiquinone reductase (non-electrogenic) activity"/>
    <property type="evidence" value="ECO:0007669"/>
    <property type="project" value="UniProtKB-UniRule"/>
</dbReference>
<dbReference type="GO" id="GO:0048038">
    <property type="term" value="F:quinone binding"/>
    <property type="evidence" value="ECO:0007669"/>
    <property type="project" value="UniProtKB-KW"/>
</dbReference>
<dbReference type="GO" id="GO:0042773">
    <property type="term" value="P:ATP synthesis coupled electron transport"/>
    <property type="evidence" value="ECO:0007669"/>
    <property type="project" value="InterPro"/>
</dbReference>
<dbReference type="FunFam" id="1.10.287.3510:FF:000001">
    <property type="entry name" value="NADH-quinone oxidoreductase subunit K"/>
    <property type="match status" value="1"/>
</dbReference>
<dbReference type="Gene3D" id="1.10.287.3510">
    <property type="match status" value="1"/>
</dbReference>
<dbReference type="HAMAP" id="MF_01456">
    <property type="entry name" value="NDH1_NuoK"/>
    <property type="match status" value="1"/>
</dbReference>
<dbReference type="InterPro" id="IPR001133">
    <property type="entry name" value="NADH_UbQ_OxRdtase_chain4L/K"/>
</dbReference>
<dbReference type="InterPro" id="IPR039428">
    <property type="entry name" value="NUOK/Mnh_C1-like"/>
</dbReference>
<dbReference type="NCBIfam" id="NF004320">
    <property type="entry name" value="PRK05715.1-2"/>
    <property type="match status" value="1"/>
</dbReference>
<dbReference type="NCBIfam" id="NF004321">
    <property type="entry name" value="PRK05715.1-3"/>
    <property type="match status" value="1"/>
</dbReference>
<dbReference type="NCBIfam" id="NF004323">
    <property type="entry name" value="PRK05715.1-5"/>
    <property type="match status" value="1"/>
</dbReference>
<dbReference type="PANTHER" id="PTHR11434:SF21">
    <property type="entry name" value="NADH DEHYDROGENASE SUBUNIT 4L-RELATED"/>
    <property type="match status" value="1"/>
</dbReference>
<dbReference type="PANTHER" id="PTHR11434">
    <property type="entry name" value="NADH-UBIQUINONE OXIDOREDUCTASE SUBUNIT ND4L"/>
    <property type="match status" value="1"/>
</dbReference>
<dbReference type="Pfam" id="PF00420">
    <property type="entry name" value="Oxidored_q2"/>
    <property type="match status" value="1"/>
</dbReference>
<keyword id="KW-0997">Cell inner membrane</keyword>
<keyword id="KW-1003">Cell membrane</keyword>
<keyword id="KW-0472">Membrane</keyword>
<keyword id="KW-0520">NAD</keyword>
<keyword id="KW-0874">Quinone</keyword>
<keyword id="KW-1185">Reference proteome</keyword>
<keyword id="KW-1278">Translocase</keyword>
<keyword id="KW-0812">Transmembrane</keyword>
<keyword id="KW-1133">Transmembrane helix</keyword>
<keyword id="KW-0813">Transport</keyword>
<keyword id="KW-0830">Ubiquinone</keyword>
<comment type="function">
    <text evidence="1">NDH-1 shuttles electrons from NADH, via FMN and iron-sulfur (Fe-S) centers, to quinones in the respiratory chain. The immediate electron acceptor for the enzyme in this species is believed to be ubiquinone. Couples the redox reaction to proton translocation (for every two electrons transferred, four hydrogen ions are translocated across the cytoplasmic membrane), and thus conserves the redox energy in a proton gradient.</text>
</comment>
<comment type="catalytic activity">
    <reaction evidence="1">
        <text>a quinone + NADH + 5 H(+)(in) = a quinol + NAD(+) + 4 H(+)(out)</text>
        <dbReference type="Rhea" id="RHEA:57888"/>
        <dbReference type="ChEBI" id="CHEBI:15378"/>
        <dbReference type="ChEBI" id="CHEBI:24646"/>
        <dbReference type="ChEBI" id="CHEBI:57540"/>
        <dbReference type="ChEBI" id="CHEBI:57945"/>
        <dbReference type="ChEBI" id="CHEBI:132124"/>
    </reaction>
</comment>
<comment type="subunit">
    <text evidence="1">NDH-1 is composed of 14 different subunits. Subunits NuoA, H, J, K, L, M, N constitute the membrane sector of the complex.</text>
</comment>
<comment type="subcellular location">
    <subcellularLocation>
        <location evidence="1">Cell inner membrane</location>
        <topology evidence="1">Multi-pass membrane protein</topology>
    </subcellularLocation>
</comment>
<comment type="similarity">
    <text evidence="1">Belongs to the complex I subunit 4L family.</text>
</comment>
<sequence>MLSLAHYLVLGAILFAISIVGIFLNRRNVIIILMAIELMLLAVNTNFVAFSHYLGDVHGQIFVFFVLTVAAAEAAIGLAILVTLFRSLDTINVEDLDQLKG</sequence>
<accession>B2JDL8</accession>
<evidence type="ECO:0000255" key="1">
    <source>
        <dbReference type="HAMAP-Rule" id="MF_01456"/>
    </source>
</evidence>
<reference key="1">
    <citation type="journal article" date="2014" name="Stand. Genomic Sci.">
        <title>Complete genome sequence of Burkholderia phymatum STM815(T), a broad host range and efficient nitrogen-fixing symbiont of Mimosa species.</title>
        <authorList>
            <person name="Moulin L."/>
            <person name="Klonowska A."/>
            <person name="Caroline B."/>
            <person name="Booth K."/>
            <person name="Vriezen J.A."/>
            <person name="Melkonian R."/>
            <person name="James E.K."/>
            <person name="Young J.P."/>
            <person name="Bena G."/>
            <person name="Hauser L."/>
            <person name="Land M."/>
            <person name="Kyrpides N."/>
            <person name="Bruce D."/>
            <person name="Chain P."/>
            <person name="Copeland A."/>
            <person name="Pitluck S."/>
            <person name="Woyke T."/>
            <person name="Lizotte-Waniewski M."/>
            <person name="Bristow J."/>
            <person name="Riley M."/>
        </authorList>
    </citation>
    <scope>NUCLEOTIDE SEQUENCE [LARGE SCALE GENOMIC DNA]</scope>
    <source>
        <strain>DSM 17167 / CIP 108236 / LMG 21445 / STM815</strain>
    </source>
</reference>
<name>NUOK_PARP8</name>
<proteinExistence type="inferred from homology"/>
<gene>
    <name evidence="1" type="primary">nuoK</name>
    <name type="ordered locus">Bphy_1999</name>
</gene>